<comment type="function">
    <text evidence="1">Probably part of an ABC transporter complex. Responsible for energy coupling to the transport system (By similarity).</text>
</comment>
<comment type="subcellular location">
    <subcellularLocation>
        <location evidence="1">Cell membrane</location>
        <topology evidence="1">Peripheral membrane protein</topology>
    </subcellularLocation>
</comment>
<comment type="similarity">
    <text evidence="3">Belongs to the ABC transporter superfamily.</text>
</comment>
<gene>
    <name type="ordered locus">SSO2030</name>
</gene>
<proteinExistence type="inferred from homology"/>
<accession>Q97WT4</accession>
<keyword id="KW-0067">ATP-binding</keyword>
<keyword id="KW-1003">Cell membrane</keyword>
<keyword id="KW-0472">Membrane</keyword>
<keyword id="KW-0547">Nucleotide-binding</keyword>
<keyword id="KW-1185">Reference proteome</keyword>
<keyword id="KW-0677">Repeat</keyword>
<keyword id="KW-1278">Translocase</keyword>
<keyword id="KW-0813">Transport</keyword>
<feature type="chain" id="PRO_0000092162" description="Putative ABC transporter ATP-binding protein SSO2030">
    <location>
        <begin position="1"/>
        <end position="530"/>
    </location>
</feature>
<feature type="domain" description="ABC transporter 1" evidence="2">
    <location>
        <begin position="6"/>
        <end position="243"/>
    </location>
</feature>
<feature type="domain" description="ABC transporter 2" evidence="2">
    <location>
        <begin position="282"/>
        <end position="516"/>
    </location>
</feature>
<feature type="binding site" evidence="2">
    <location>
        <begin position="38"/>
        <end position="45"/>
    </location>
    <ligand>
        <name>ATP</name>
        <dbReference type="ChEBI" id="CHEBI:30616"/>
        <label>1</label>
    </ligand>
</feature>
<feature type="binding site" evidence="2">
    <location>
        <begin position="314"/>
        <end position="321"/>
    </location>
    <ligand>
        <name>ATP</name>
        <dbReference type="ChEBI" id="CHEBI:30616"/>
        <label>2</label>
    </ligand>
</feature>
<organism>
    <name type="scientific">Saccharolobus solfataricus (strain ATCC 35092 / DSM 1617 / JCM 11322 / P2)</name>
    <name type="common">Sulfolobus solfataricus</name>
    <dbReference type="NCBI Taxonomy" id="273057"/>
    <lineage>
        <taxon>Archaea</taxon>
        <taxon>Thermoproteota</taxon>
        <taxon>Thermoprotei</taxon>
        <taxon>Sulfolobales</taxon>
        <taxon>Sulfolobaceae</taxon>
        <taxon>Saccharolobus</taxon>
    </lineage>
</organism>
<dbReference type="EC" id="7.-.-.-"/>
<dbReference type="EMBL" id="AE006641">
    <property type="protein sequence ID" value="AAK42217.1"/>
    <property type="molecule type" value="Genomic_DNA"/>
</dbReference>
<dbReference type="PIR" id="B90370">
    <property type="entry name" value="B90370"/>
</dbReference>
<dbReference type="RefSeq" id="WP_010923738.1">
    <property type="nucleotide sequence ID" value="NC_002754.1"/>
</dbReference>
<dbReference type="SMR" id="Q97WT4"/>
<dbReference type="FunCoup" id="Q97WT4">
    <property type="interactions" value="3"/>
</dbReference>
<dbReference type="STRING" id="273057.SSO2030"/>
<dbReference type="PaxDb" id="273057-SSO2030"/>
<dbReference type="EnsemblBacteria" id="AAK42217">
    <property type="protein sequence ID" value="AAK42217"/>
    <property type="gene ID" value="SSO2030"/>
</dbReference>
<dbReference type="GeneID" id="1453544"/>
<dbReference type="KEGG" id="sso:SSO2030"/>
<dbReference type="PATRIC" id="fig|273057.12.peg.2111"/>
<dbReference type="eggNOG" id="arCOG00188">
    <property type="taxonomic scope" value="Archaea"/>
</dbReference>
<dbReference type="HOGENOM" id="CLU_000604_86_7_2"/>
<dbReference type="InParanoid" id="Q97WT4"/>
<dbReference type="PhylomeDB" id="Q97WT4"/>
<dbReference type="Proteomes" id="UP000001974">
    <property type="component" value="Chromosome"/>
</dbReference>
<dbReference type="GO" id="GO:0005886">
    <property type="term" value="C:plasma membrane"/>
    <property type="evidence" value="ECO:0000318"/>
    <property type="project" value="GO_Central"/>
</dbReference>
<dbReference type="GO" id="GO:0005524">
    <property type="term" value="F:ATP binding"/>
    <property type="evidence" value="ECO:0007669"/>
    <property type="project" value="UniProtKB-KW"/>
</dbReference>
<dbReference type="GO" id="GO:0016887">
    <property type="term" value="F:ATP hydrolysis activity"/>
    <property type="evidence" value="ECO:0007669"/>
    <property type="project" value="InterPro"/>
</dbReference>
<dbReference type="GO" id="GO:0022857">
    <property type="term" value="F:transmembrane transporter activity"/>
    <property type="evidence" value="ECO:0000318"/>
    <property type="project" value="GO_Central"/>
</dbReference>
<dbReference type="GO" id="GO:0055085">
    <property type="term" value="P:transmembrane transport"/>
    <property type="evidence" value="ECO:0000318"/>
    <property type="project" value="GO_Central"/>
</dbReference>
<dbReference type="CDD" id="cd03225">
    <property type="entry name" value="ABC_cobalt_CbiO_domain1"/>
    <property type="match status" value="2"/>
</dbReference>
<dbReference type="FunFam" id="3.40.50.300:FF:003633">
    <property type="entry name" value="Cobalt ABC transporter ATP-binding protein"/>
    <property type="match status" value="1"/>
</dbReference>
<dbReference type="FunFam" id="3.40.50.300:FF:003642">
    <property type="entry name" value="Cobalt ABC transporter ATP-binding protein"/>
    <property type="match status" value="1"/>
</dbReference>
<dbReference type="Gene3D" id="3.40.50.300">
    <property type="entry name" value="P-loop containing nucleotide triphosphate hydrolases"/>
    <property type="match status" value="2"/>
</dbReference>
<dbReference type="InterPro" id="IPR003593">
    <property type="entry name" value="AAA+_ATPase"/>
</dbReference>
<dbReference type="InterPro" id="IPR003439">
    <property type="entry name" value="ABC_transporter-like_ATP-bd"/>
</dbReference>
<dbReference type="InterPro" id="IPR015856">
    <property type="entry name" value="ABC_transpr_CbiO/EcfA_su"/>
</dbReference>
<dbReference type="InterPro" id="IPR050095">
    <property type="entry name" value="ECF_ABC_transporter_ATP-bd"/>
</dbReference>
<dbReference type="InterPro" id="IPR027417">
    <property type="entry name" value="P-loop_NTPase"/>
</dbReference>
<dbReference type="PANTHER" id="PTHR43553:SF23">
    <property type="entry name" value="ABC TRANSPORTER ATP-BINDING COMPONENT"/>
    <property type="match status" value="1"/>
</dbReference>
<dbReference type="PANTHER" id="PTHR43553">
    <property type="entry name" value="HEAVY METAL TRANSPORTER"/>
    <property type="match status" value="1"/>
</dbReference>
<dbReference type="Pfam" id="PF00005">
    <property type="entry name" value="ABC_tran"/>
    <property type="match status" value="2"/>
</dbReference>
<dbReference type="SMART" id="SM00382">
    <property type="entry name" value="AAA"/>
    <property type="match status" value="2"/>
</dbReference>
<dbReference type="SUPFAM" id="SSF52540">
    <property type="entry name" value="P-loop containing nucleoside triphosphate hydrolases"/>
    <property type="match status" value="2"/>
</dbReference>
<dbReference type="PROSITE" id="PS50893">
    <property type="entry name" value="ABC_TRANSPORTER_2"/>
    <property type="match status" value="2"/>
</dbReference>
<evidence type="ECO:0000250" key="1"/>
<evidence type="ECO:0000255" key="2">
    <source>
        <dbReference type="PROSITE-ProRule" id="PRU00434"/>
    </source>
</evidence>
<evidence type="ECO:0000305" key="3"/>
<protein>
    <recommendedName>
        <fullName>Putative ABC transporter ATP-binding protein SSO2030</fullName>
        <ecNumber>7.-.-.-</ecNumber>
    </recommendedName>
</protein>
<name>Y2030_SACS2</name>
<reference key="1">
    <citation type="journal article" date="2001" name="Proc. Natl. Acad. Sci. U.S.A.">
        <title>The complete genome of the crenarchaeon Sulfolobus solfataricus P2.</title>
        <authorList>
            <person name="She Q."/>
            <person name="Singh R.K."/>
            <person name="Confalonieri F."/>
            <person name="Zivanovic Y."/>
            <person name="Allard G."/>
            <person name="Awayez M.J."/>
            <person name="Chan-Weiher C.C.-Y."/>
            <person name="Clausen I.G."/>
            <person name="Curtis B.A."/>
            <person name="De Moors A."/>
            <person name="Erauso G."/>
            <person name="Fletcher C."/>
            <person name="Gordon P.M.K."/>
            <person name="Heikamp-de Jong I."/>
            <person name="Jeffries A.C."/>
            <person name="Kozera C.J."/>
            <person name="Medina N."/>
            <person name="Peng X."/>
            <person name="Thi-Ngoc H.P."/>
            <person name="Redder P."/>
            <person name="Schenk M.E."/>
            <person name="Theriault C."/>
            <person name="Tolstrup N."/>
            <person name="Charlebois R.L."/>
            <person name="Doolittle W.F."/>
            <person name="Duguet M."/>
            <person name="Gaasterland T."/>
            <person name="Garrett R.A."/>
            <person name="Ragan M.A."/>
            <person name="Sensen C.W."/>
            <person name="Van der Oost J."/>
        </authorList>
    </citation>
    <scope>NUCLEOTIDE SEQUENCE [LARGE SCALE GENOMIC DNA]</scope>
    <source>
        <strain>ATCC 35092 / DSM 1617 / JCM 11322 / P2</strain>
    </source>
</reference>
<sequence length="530" mass="60110">MKFVEIRDLQVTYMGKDKPSIVVDKLDIEEGESVLITGRSGSGKSTLVSVINGVIPHLINAEIKGEVRVFGFDVKSTPIHEISKYVGTLLQDPDTQAFNYTIIDEVAFGVENYMISRDEMIERVEESMKIYGISHLRDREINTLSGGELQRTILASVLAMRPKALILDEPTSNIDPQGTREILELVKTFRSEGISLVLVEHKIERVLPFVDRIIVVEEGKIAVDVRKDEIVDKADFLYSLGLEIPDYMLFLKKNGFRKIDYEYLRKTYTYRPPSRIGGKGEALYASVKVKTKNGIYLINTKISLKQGTITALMGKNGSGKTTLLKVIVGLIDKKRLIVEEEKVIVNGVDLSKTKLVERGKFIAYLPQFFDVMFIKRTVEDEIKFSMKNRGTYDEKRLGEVLKMFSLDAYRKEDPLVLSMGQRRRVAMASVLAGGAKVILMDEPTSGQDWYHRQILGKELLELRDKGYTILVVTHDSRFVDRFADYLLVMNEGKIVLEGKPEEVFIKSLRHGIEPPLEYELGGLIKNEHFS</sequence>